<feature type="chain" id="PRO_1000051970" description="DNA-directed RNA polymerase subunit beta">
    <location>
        <begin position="1"/>
        <end position="1343"/>
    </location>
</feature>
<sequence length="1343" mass="149804">MGYSYSEKKRIRKDFGKRPQVLNVPYLLTIQLDSFDKFIQKDPEGQQGLEAAFRSVFPIVSNNGYTELQYVDYRLEEPEFDVRECQIRGSTYAAGLRVKLRLVSYDKESSSRAVKDIKENEVYMGEIPLMTDNGTFVINGTERVIVSQLHRSPGVFFDSDKGKTHSSGKVLYNARIIPYRGSWLDFEFDPKDNLFARIDRRRKLPATIILRALGYTTEEILNLFFDKITFEISGDKLLMTLVPERLRGETASFDIEANGKVYVERGRRITARHIKALEKDNISQVVVPSEYILGKVASKDYVDLESGEIICPANGEISLETLAKLAQAGYTTIETLFTNDLDYGPYISETLRVDPTYDKTSALYEIYRMMRPGEPPTPESSEALFNNLFFSAERYDLSTVGRMKFNRSLAFPEGEGAGILSNEDIIAVMRKLIDIRNGRGEVDDIDHLGNRRIRSVGEMAENQFRIGLVRVERAVKERLSLGDLDAITPQDLINPKPISAAVKEFFGSSQLSQFMDQNNPLSEVTHKRRISALGPGGLTRERAGFEVRDVHNTHYGRLCPIETPEGPNIGLINSLSAFARTNDYGFLETPYRKVVDGQVTEEIEYLSAIDEANYIIAQANSNLDENNRFTDAFVTARGERGESGLYKPEDIHYMDVSTQQVVSVAAALIPFLEHDDANRALMGANMQRQAVPTLRADKPLVGTGMEKPIALDSGVAVVAKRGGTVQYVDASRIVIKVNEDETIAGEAGIDIYNLIKYTRSNQNTCINQIPCVNLGDPINRGEVLADGPSTDLGELALGQNIRVAFMPWNGYNFEDSMLVSERVVQQDRFTTIHIQELSCVARDTKLGSEEITADIPNVGESALSKLDESGIVYVGAEVKGGDILVGKVTPKGETQLTPEEKLLRAIFGEKASDVKDSSLRVPNGTSGTVIDVQVFTRDGVEKDKRALEIEEMQLREAKKDLTEELEILEAGLFARVRNLLISSGADAAQLDKLDRTKWLEQTIADEEKQNQLEQLAEQYEELRKEFEHKLEVKRKKIIKGDDLAPGVLKVVKVYLAVKRQIQPGDKMAGRHGNKGVISKINPVEDMPYDENGQPVEIVLNPLGVPSRMNIGQILETHLGLAAKGIGDQINTMLKQKQEVEKLRSYIQKAYDLLGNGSQKVDLSTFTDEEVLRLAGNLRKGLPVATPVFDGADEAEIKELLKLGGLPTSGQITLYDGRTGEKFERPVTVGYMYMLKLNHLVDDKMHARSTGSYSLVTQQPLGGKAQFGGQRFGEMEVWALEAYGAAYTLQEMLTVKSDDVNGRTKMYKNIVSGNQHMDPGTPESFNVIMKEIRSLGLNIELDEE</sequence>
<comment type="function">
    <text evidence="1">DNA-dependent RNA polymerase catalyzes the transcription of DNA into RNA using the four ribonucleoside triphosphates as substrates.</text>
</comment>
<comment type="catalytic activity">
    <reaction evidence="1">
        <text>RNA(n) + a ribonucleoside 5'-triphosphate = RNA(n+1) + diphosphate</text>
        <dbReference type="Rhea" id="RHEA:21248"/>
        <dbReference type="Rhea" id="RHEA-COMP:14527"/>
        <dbReference type="Rhea" id="RHEA-COMP:17342"/>
        <dbReference type="ChEBI" id="CHEBI:33019"/>
        <dbReference type="ChEBI" id="CHEBI:61557"/>
        <dbReference type="ChEBI" id="CHEBI:140395"/>
        <dbReference type="EC" id="2.7.7.6"/>
    </reaction>
</comment>
<comment type="subunit">
    <text evidence="1">The RNAP catalytic core consists of 2 alpha, 1 beta, 1 beta' and 1 omega subunit. When a sigma factor is associated with the core the holoenzyme is formed, which can initiate transcription.</text>
</comment>
<comment type="similarity">
    <text evidence="1">Belongs to the RNA polymerase beta chain family.</text>
</comment>
<keyword id="KW-0240">DNA-directed RNA polymerase</keyword>
<keyword id="KW-0548">Nucleotidyltransferase</keyword>
<keyword id="KW-0804">Transcription</keyword>
<keyword id="KW-0808">Transferase</keyword>
<organism>
    <name type="scientific">Haemophilus influenzae (strain PittEE)</name>
    <dbReference type="NCBI Taxonomy" id="374930"/>
    <lineage>
        <taxon>Bacteria</taxon>
        <taxon>Pseudomonadati</taxon>
        <taxon>Pseudomonadota</taxon>
        <taxon>Gammaproteobacteria</taxon>
        <taxon>Pasteurellales</taxon>
        <taxon>Pasteurellaceae</taxon>
        <taxon>Haemophilus</taxon>
    </lineage>
</organism>
<gene>
    <name evidence="1" type="primary">rpoB</name>
    <name type="ordered locus">CGSHiEE_00425</name>
</gene>
<reference key="1">
    <citation type="journal article" date="2007" name="Genome Biol.">
        <title>Characterization and modeling of the Haemophilus influenzae core and supragenomes based on the complete genomic sequences of Rd and 12 clinical nontypeable strains.</title>
        <authorList>
            <person name="Hogg J.S."/>
            <person name="Hu F.Z."/>
            <person name="Janto B."/>
            <person name="Boissy R."/>
            <person name="Hayes J."/>
            <person name="Keefe R."/>
            <person name="Post J.C."/>
            <person name="Ehrlich G.D."/>
        </authorList>
    </citation>
    <scope>NUCLEOTIDE SEQUENCE [LARGE SCALE GENOMIC DNA]</scope>
    <source>
        <strain>PittEE</strain>
    </source>
</reference>
<dbReference type="EC" id="2.7.7.6" evidence="1"/>
<dbReference type="EMBL" id="CP000671">
    <property type="protein sequence ID" value="ABQ97579.1"/>
    <property type="molecule type" value="Genomic_DNA"/>
</dbReference>
<dbReference type="SMR" id="A5U9X8"/>
<dbReference type="KEGG" id="hip:CGSHiEE_00425"/>
<dbReference type="HOGENOM" id="CLU_000524_4_0_6"/>
<dbReference type="GO" id="GO:0000428">
    <property type="term" value="C:DNA-directed RNA polymerase complex"/>
    <property type="evidence" value="ECO:0007669"/>
    <property type="project" value="UniProtKB-KW"/>
</dbReference>
<dbReference type="GO" id="GO:0003677">
    <property type="term" value="F:DNA binding"/>
    <property type="evidence" value="ECO:0007669"/>
    <property type="project" value="UniProtKB-UniRule"/>
</dbReference>
<dbReference type="GO" id="GO:0003899">
    <property type="term" value="F:DNA-directed RNA polymerase activity"/>
    <property type="evidence" value="ECO:0007669"/>
    <property type="project" value="UniProtKB-UniRule"/>
</dbReference>
<dbReference type="GO" id="GO:0032549">
    <property type="term" value="F:ribonucleoside binding"/>
    <property type="evidence" value="ECO:0007669"/>
    <property type="project" value="InterPro"/>
</dbReference>
<dbReference type="GO" id="GO:0006351">
    <property type="term" value="P:DNA-templated transcription"/>
    <property type="evidence" value="ECO:0007669"/>
    <property type="project" value="UniProtKB-UniRule"/>
</dbReference>
<dbReference type="CDD" id="cd00653">
    <property type="entry name" value="RNA_pol_B_RPB2"/>
    <property type="match status" value="1"/>
</dbReference>
<dbReference type="FunFam" id="2.40.270.10:FF:000004">
    <property type="entry name" value="DNA-directed RNA polymerase subunit beta"/>
    <property type="match status" value="1"/>
</dbReference>
<dbReference type="FunFam" id="2.40.50.100:FF:000006">
    <property type="entry name" value="DNA-directed RNA polymerase subunit beta"/>
    <property type="match status" value="1"/>
</dbReference>
<dbReference type="FunFam" id="2.40.50.150:FF:000001">
    <property type="entry name" value="DNA-directed RNA polymerase subunit beta"/>
    <property type="match status" value="1"/>
</dbReference>
<dbReference type="FunFam" id="3.90.1100.10:FF:000002">
    <property type="entry name" value="DNA-directed RNA polymerase subunit beta"/>
    <property type="match status" value="1"/>
</dbReference>
<dbReference type="FunFam" id="3.90.1110.10:FF:000001">
    <property type="entry name" value="DNA-directed RNA polymerase subunit beta"/>
    <property type="match status" value="1"/>
</dbReference>
<dbReference type="FunFam" id="3.90.1110.10:FF:000004">
    <property type="entry name" value="DNA-directed RNA polymerase subunit beta"/>
    <property type="match status" value="1"/>
</dbReference>
<dbReference type="FunFam" id="3.90.1800.10:FF:000001">
    <property type="entry name" value="DNA-directed RNA polymerase subunit beta"/>
    <property type="match status" value="1"/>
</dbReference>
<dbReference type="Gene3D" id="2.40.50.100">
    <property type="match status" value="1"/>
</dbReference>
<dbReference type="Gene3D" id="2.40.50.150">
    <property type="match status" value="1"/>
</dbReference>
<dbReference type="Gene3D" id="3.90.1100.10">
    <property type="match status" value="3"/>
</dbReference>
<dbReference type="Gene3D" id="6.10.140.1670">
    <property type="match status" value="1"/>
</dbReference>
<dbReference type="Gene3D" id="2.40.270.10">
    <property type="entry name" value="DNA-directed RNA polymerase, subunit 2, domain 6"/>
    <property type="match status" value="1"/>
</dbReference>
<dbReference type="Gene3D" id="3.90.1800.10">
    <property type="entry name" value="RNA polymerase alpha subunit dimerisation domain"/>
    <property type="match status" value="1"/>
</dbReference>
<dbReference type="Gene3D" id="3.90.1110.10">
    <property type="entry name" value="RNA polymerase Rpb2, domain 2"/>
    <property type="match status" value="1"/>
</dbReference>
<dbReference type="HAMAP" id="MF_01321">
    <property type="entry name" value="RNApol_bact_RpoB"/>
    <property type="match status" value="1"/>
</dbReference>
<dbReference type="InterPro" id="IPR019462">
    <property type="entry name" value="DNA-dir_RNA_pol_bsu_external_1"/>
</dbReference>
<dbReference type="InterPro" id="IPR015712">
    <property type="entry name" value="DNA-dir_RNA_pol_su2"/>
</dbReference>
<dbReference type="InterPro" id="IPR007120">
    <property type="entry name" value="DNA-dir_RNAP_su2_dom"/>
</dbReference>
<dbReference type="InterPro" id="IPR037033">
    <property type="entry name" value="DNA-dir_RNAP_su2_hyb_sf"/>
</dbReference>
<dbReference type="InterPro" id="IPR010243">
    <property type="entry name" value="RNA_pol_bsu_bac"/>
</dbReference>
<dbReference type="InterPro" id="IPR007121">
    <property type="entry name" value="RNA_pol_bsu_CS"/>
</dbReference>
<dbReference type="InterPro" id="IPR007644">
    <property type="entry name" value="RNA_pol_bsu_protrusion"/>
</dbReference>
<dbReference type="InterPro" id="IPR007642">
    <property type="entry name" value="RNA_pol_Rpb2_2"/>
</dbReference>
<dbReference type="InterPro" id="IPR037034">
    <property type="entry name" value="RNA_pol_Rpb2_2_sf"/>
</dbReference>
<dbReference type="InterPro" id="IPR007645">
    <property type="entry name" value="RNA_pol_Rpb2_3"/>
</dbReference>
<dbReference type="InterPro" id="IPR007641">
    <property type="entry name" value="RNA_pol_Rpb2_7"/>
</dbReference>
<dbReference type="InterPro" id="IPR014724">
    <property type="entry name" value="RNA_pol_RPB2_OB-fold"/>
</dbReference>
<dbReference type="NCBIfam" id="NF001616">
    <property type="entry name" value="PRK00405.1"/>
    <property type="match status" value="1"/>
</dbReference>
<dbReference type="NCBIfam" id="TIGR02013">
    <property type="entry name" value="rpoB"/>
    <property type="match status" value="1"/>
</dbReference>
<dbReference type="PANTHER" id="PTHR20856">
    <property type="entry name" value="DNA-DIRECTED RNA POLYMERASE I SUBUNIT 2"/>
    <property type="match status" value="1"/>
</dbReference>
<dbReference type="Pfam" id="PF04563">
    <property type="entry name" value="RNA_pol_Rpb2_1"/>
    <property type="match status" value="1"/>
</dbReference>
<dbReference type="Pfam" id="PF04561">
    <property type="entry name" value="RNA_pol_Rpb2_2"/>
    <property type="match status" value="2"/>
</dbReference>
<dbReference type="Pfam" id="PF04565">
    <property type="entry name" value="RNA_pol_Rpb2_3"/>
    <property type="match status" value="1"/>
</dbReference>
<dbReference type="Pfam" id="PF10385">
    <property type="entry name" value="RNA_pol_Rpb2_45"/>
    <property type="match status" value="1"/>
</dbReference>
<dbReference type="Pfam" id="PF00562">
    <property type="entry name" value="RNA_pol_Rpb2_6"/>
    <property type="match status" value="1"/>
</dbReference>
<dbReference type="Pfam" id="PF04560">
    <property type="entry name" value="RNA_pol_Rpb2_7"/>
    <property type="match status" value="1"/>
</dbReference>
<dbReference type="SUPFAM" id="SSF64484">
    <property type="entry name" value="beta and beta-prime subunits of DNA dependent RNA-polymerase"/>
    <property type="match status" value="1"/>
</dbReference>
<dbReference type="PROSITE" id="PS01166">
    <property type="entry name" value="RNA_POL_BETA"/>
    <property type="match status" value="1"/>
</dbReference>
<protein>
    <recommendedName>
        <fullName evidence="1">DNA-directed RNA polymerase subunit beta</fullName>
        <shortName evidence="1">RNAP subunit beta</shortName>
        <ecNumber evidence="1">2.7.7.6</ecNumber>
    </recommendedName>
    <alternativeName>
        <fullName evidence="1">RNA polymerase subunit beta</fullName>
    </alternativeName>
    <alternativeName>
        <fullName evidence="1">Transcriptase subunit beta</fullName>
    </alternativeName>
</protein>
<evidence type="ECO:0000255" key="1">
    <source>
        <dbReference type="HAMAP-Rule" id="MF_01321"/>
    </source>
</evidence>
<proteinExistence type="inferred from homology"/>
<accession>A5U9X8</accession>
<name>RPOB_HAEIE</name>